<comment type="function">
    <text evidence="1">Essential for recycling GMP and indirectly, cGMP.</text>
</comment>
<comment type="catalytic activity">
    <reaction evidence="1">
        <text>GMP + ATP = GDP + ADP</text>
        <dbReference type="Rhea" id="RHEA:20780"/>
        <dbReference type="ChEBI" id="CHEBI:30616"/>
        <dbReference type="ChEBI" id="CHEBI:58115"/>
        <dbReference type="ChEBI" id="CHEBI:58189"/>
        <dbReference type="ChEBI" id="CHEBI:456216"/>
        <dbReference type="EC" id="2.7.4.8"/>
    </reaction>
</comment>
<comment type="subcellular location">
    <subcellularLocation>
        <location evidence="1">Cytoplasm</location>
    </subcellularLocation>
</comment>
<comment type="similarity">
    <text evidence="1">Belongs to the guanylate kinase family.</text>
</comment>
<protein>
    <recommendedName>
        <fullName evidence="1">Guanylate kinase</fullName>
        <ecNumber evidence="1">2.7.4.8</ecNumber>
    </recommendedName>
    <alternativeName>
        <fullName evidence="1">GMP kinase</fullName>
    </alternativeName>
</protein>
<organism>
    <name type="scientific">Wolinella succinogenes (strain ATCC 29543 / DSM 1740 / CCUG 13145 / JCM 31913 / LMG 7466 / NCTC 11488 / FDC 602W)</name>
    <name type="common">Vibrio succinogenes</name>
    <dbReference type="NCBI Taxonomy" id="273121"/>
    <lineage>
        <taxon>Bacteria</taxon>
        <taxon>Pseudomonadati</taxon>
        <taxon>Campylobacterota</taxon>
        <taxon>Epsilonproteobacteria</taxon>
        <taxon>Campylobacterales</taxon>
        <taxon>Helicobacteraceae</taxon>
        <taxon>Wolinella</taxon>
    </lineage>
</organism>
<dbReference type="EC" id="2.7.4.8" evidence="1"/>
<dbReference type="EMBL" id="BX571657">
    <property type="protein sequence ID" value="CAE09349.1"/>
    <property type="molecule type" value="Genomic_DNA"/>
</dbReference>
<dbReference type="RefSeq" id="WP_011138149.1">
    <property type="nucleotide sequence ID" value="NC_005090.1"/>
</dbReference>
<dbReference type="SMR" id="Q7MAK5"/>
<dbReference type="STRING" id="273121.WS0188"/>
<dbReference type="KEGG" id="wsu:WS0188"/>
<dbReference type="eggNOG" id="COG0194">
    <property type="taxonomic scope" value="Bacteria"/>
</dbReference>
<dbReference type="HOGENOM" id="CLU_001715_1_2_7"/>
<dbReference type="Proteomes" id="UP000000422">
    <property type="component" value="Chromosome"/>
</dbReference>
<dbReference type="GO" id="GO:0005829">
    <property type="term" value="C:cytosol"/>
    <property type="evidence" value="ECO:0007669"/>
    <property type="project" value="TreeGrafter"/>
</dbReference>
<dbReference type="GO" id="GO:0005524">
    <property type="term" value="F:ATP binding"/>
    <property type="evidence" value="ECO:0007669"/>
    <property type="project" value="UniProtKB-UniRule"/>
</dbReference>
<dbReference type="GO" id="GO:0004385">
    <property type="term" value="F:guanylate kinase activity"/>
    <property type="evidence" value="ECO:0007669"/>
    <property type="project" value="UniProtKB-UniRule"/>
</dbReference>
<dbReference type="CDD" id="cd00071">
    <property type="entry name" value="GMPK"/>
    <property type="match status" value="1"/>
</dbReference>
<dbReference type="FunFam" id="3.30.63.10:FF:000002">
    <property type="entry name" value="Guanylate kinase 1"/>
    <property type="match status" value="1"/>
</dbReference>
<dbReference type="Gene3D" id="3.30.63.10">
    <property type="entry name" value="Guanylate Kinase phosphate binding domain"/>
    <property type="match status" value="1"/>
</dbReference>
<dbReference type="Gene3D" id="3.40.50.300">
    <property type="entry name" value="P-loop containing nucleotide triphosphate hydrolases"/>
    <property type="match status" value="1"/>
</dbReference>
<dbReference type="HAMAP" id="MF_00328">
    <property type="entry name" value="Guanylate_kinase"/>
    <property type="match status" value="1"/>
</dbReference>
<dbReference type="InterPro" id="IPR008145">
    <property type="entry name" value="GK/Ca_channel_bsu"/>
</dbReference>
<dbReference type="InterPro" id="IPR008144">
    <property type="entry name" value="Guanylate_kin-like_dom"/>
</dbReference>
<dbReference type="InterPro" id="IPR017665">
    <property type="entry name" value="Guanylate_kinase"/>
</dbReference>
<dbReference type="InterPro" id="IPR020590">
    <property type="entry name" value="Guanylate_kinase_CS"/>
</dbReference>
<dbReference type="InterPro" id="IPR027417">
    <property type="entry name" value="P-loop_NTPase"/>
</dbReference>
<dbReference type="NCBIfam" id="TIGR03263">
    <property type="entry name" value="guanyl_kin"/>
    <property type="match status" value="1"/>
</dbReference>
<dbReference type="PANTHER" id="PTHR23117:SF13">
    <property type="entry name" value="GUANYLATE KINASE"/>
    <property type="match status" value="1"/>
</dbReference>
<dbReference type="PANTHER" id="PTHR23117">
    <property type="entry name" value="GUANYLATE KINASE-RELATED"/>
    <property type="match status" value="1"/>
</dbReference>
<dbReference type="Pfam" id="PF00625">
    <property type="entry name" value="Guanylate_kin"/>
    <property type="match status" value="1"/>
</dbReference>
<dbReference type="SMART" id="SM00072">
    <property type="entry name" value="GuKc"/>
    <property type="match status" value="1"/>
</dbReference>
<dbReference type="SUPFAM" id="SSF52540">
    <property type="entry name" value="P-loop containing nucleoside triphosphate hydrolases"/>
    <property type="match status" value="1"/>
</dbReference>
<dbReference type="PROSITE" id="PS00856">
    <property type="entry name" value="GUANYLATE_KINASE_1"/>
    <property type="match status" value="1"/>
</dbReference>
<dbReference type="PROSITE" id="PS50052">
    <property type="entry name" value="GUANYLATE_KINASE_2"/>
    <property type="match status" value="1"/>
</dbReference>
<accession>Q7MAK5</accession>
<proteinExistence type="inferred from homology"/>
<sequence>MERSKGAILVLSGPSGSGKSSLCKTLFKEIKNAYFSVSTTTRTPREGEIEGKHYHFVSKEKFLEGIEENFFLEWAEVHGNYYGTSKESVESALAQGKLVVFDIDIQGHRNIKESYPELTTSVFITTPTQQELRERLVLRGTDDKETIDLRVMHAYTEMKHIKEFDFVIVNRDLKESEKLLLSIARAALSKRILYDVESLVARWKSKETPKTPNSQ</sequence>
<name>KGUA_WOLSU</name>
<feature type="chain" id="PRO_0000170642" description="Guanylate kinase">
    <location>
        <begin position="1"/>
        <end position="215"/>
    </location>
</feature>
<feature type="domain" description="Guanylate kinase-like" evidence="1">
    <location>
        <begin position="6"/>
        <end position="185"/>
    </location>
</feature>
<feature type="binding site" evidence="1">
    <location>
        <begin position="13"/>
        <end position="20"/>
    </location>
    <ligand>
        <name>ATP</name>
        <dbReference type="ChEBI" id="CHEBI:30616"/>
    </ligand>
</feature>
<reference key="1">
    <citation type="journal article" date="2003" name="Proc. Natl. Acad. Sci. U.S.A.">
        <title>Complete genome sequence and analysis of Wolinella succinogenes.</title>
        <authorList>
            <person name="Baar C."/>
            <person name="Eppinger M."/>
            <person name="Raddatz G."/>
            <person name="Simon J."/>
            <person name="Lanz C."/>
            <person name="Klimmek O."/>
            <person name="Nandakumar R."/>
            <person name="Gross R."/>
            <person name="Rosinus A."/>
            <person name="Keller H."/>
            <person name="Jagtap P."/>
            <person name="Linke B."/>
            <person name="Meyer F."/>
            <person name="Lederer H."/>
            <person name="Schuster S.C."/>
        </authorList>
    </citation>
    <scope>NUCLEOTIDE SEQUENCE [LARGE SCALE GENOMIC DNA]</scope>
    <source>
        <strain>ATCC 29543 / DSM 1740 / CCUG 13145 / JCM 31913 / LMG 7466 / NCTC 11488 / FDC 602W</strain>
    </source>
</reference>
<evidence type="ECO:0000255" key="1">
    <source>
        <dbReference type="HAMAP-Rule" id="MF_00328"/>
    </source>
</evidence>
<keyword id="KW-0067">ATP-binding</keyword>
<keyword id="KW-0963">Cytoplasm</keyword>
<keyword id="KW-0418">Kinase</keyword>
<keyword id="KW-0547">Nucleotide-binding</keyword>
<keyword id="KW-1185">Reference proteome</keyword>
<keyword id="KW-0808">Transferase</keyword>
<gene>
    <name evidence="1" type="primary">gmk</name>
    <name type="ordered locus">WS0188</name>
</gene>